<reference key="1">
    <citation type="journal article" date="2002" name="Nature">
        <title>Comparison of the genomes of two Xanthomonas pathogens with differing host specificities.</title>
        <authorList>
            <person name="da Silva A.C.R."/>
            <person name="Ferro J.A."/>
            <person name="Reinach F.C."/>
            <person name="Farah C.S."/>
            <person name="Furlan L.R."/>
            <person name="Quaggio R.B."/>
            <person name="Monteiro-Vitorello C.B."/>
            <person name="Van Sluys M.A."/>
            <person name="Almeida N.F. Jr."/>
            <person name="Alves L.M.C."/>
            <person name="do Amaral A.M."/>
            <person name="Bertolini M.C."/>
            <person name="Camargo L.E.A."/>
            <person name="Camarotte G."/>
            <person name="Cannavan F."/>
            <person name="Cardozo J."/>
            <person name="Chambergo F."/>
            <person name="Ciapina L.P."/>
            <person name="Cicarelli R.M.B."/>
            <person name="Coutinho L.L."/>
            <person name="Cursino-Santos J.R."/>
            <person name="El-Dorry H."/>
            <person name="Faria J.B."/>
            <person name="Ferreira A.J.S."/>
            <person name="Ferreira R.C.C."/>
            <person name="Ferro M.I.T."/>
            <person name="Formighieri E.F."/>
            <person name="Franco M.C."/>
            <person name="Greggio C.C."/>
            <person name="Gruber A."/>
            <person name="Katsuyama A.M."/>
            <person name="Kishi L.T."/>
            <person name="Leite R.P."/>
            <person name="Lemos E.G.M."/>
            <person name="Lemos M.V.F."/>
            <person name="Locali E.C."/>
            <person name="Machado M.A."/>
            <person name="Madeira A.M.B.N."/>
            <person name="Martinez-Rossi N.M."/>
            <person name="Martins E.C."/>
            <person name="Meidanis J."/>
            <person name="Menck C.F.M."/>
            <person name="Miyaki C.Y."/>
            <person name="Moon D.H."/>
            <person name="Moreira L.M."/>
            <person name="Novo M.T.M."/>
            <person name="Okura V.K."/>
            <person name="Oliveira M.C."/>
            <person name="Oliveira V.R."/>
            <person name="Pereira H.A."/>
            <person name="Rossi A."/>
            <person name="Sena J.A.D."/>
            <person name="Silva C."/>
            <person name="de Souza R.F."/>
            <person name="Spinola L.A.F."/>
            <person name="Takita M.A."/>
            <person name="Tamura R.E."/>
            <person name="Teixeira E.C."/>
            <person name="Tezza R.I.D."/>
            <person name="Trindade dos Santos M."/>
            <person name="Truffi D."/>
            <person name="Tsai S.M."/>
            <person name="White F.F."/>
            <person name="Setubal J.C."/>
            <person name="Kitajima J.P."/>
        </authorList>
    </citation>
    <scope>NUCLEOTIDE SEQUENCE [LARGE SCALE GENOMIC DNA]</scope>
    <source>
        <strain>306</strain>
    </source>
</reference>
<proteinExistence type="inferred from homology"/>
<comment type="function">
    <text evidence="1">Excises uracil residues from the DNA which can arise as a result of misincorporation of dUMP residues by DNA polymerase or due to deamination of cytosine.</text>
</comment>
<comment type="catalytic activity">
    <reaction evidence="1">
        <text>Hydrolyzes single-stranded DNA or mismatched double-stranded DNA and polynucleotides, releasing free uracil.</text>
        <dbReference type="EC" id="3.2.2.27"/>
    </reaction>
</comment>
<comment type="subcellular location">
    <subcellularLocation>
        <location evidence="1">Cytoplasm</location>
    </subcellularLocation>
</comment>
<comment type="similarity">
    <text evidence="1">Belongs to the uracil-DNA glycosylase (UDG) superfamily. UNG family.</text>
</comment>
<name>UNG_XANAC</name>
<evidence type="ECO:0000255" key="1">
    <source>
        <dbReference type="HAMAP-Rule" id="MF_00148"/>
    </source>
</evidence>
<sequence>MTEGEGRIQLEPSWKARVGDWLLRPQMRELSAFLRQRKAAGARVFPPGPQIFAAFDATPFEQVKVVILGQDPYHGEGQAHGLCFSVLPGVPVPPSLLNIYKEIQDDLGIARPDHGYLMPWARQGVLLLNAVLTVEQGRAGAHQNKGWEGFTDHVVETLNREREGLVFLLWGSYAQSKGKVIDQTRHRVLKAPHPSPLSAHRGFLGCQHFSKTNDHLRRRGLSPIDWSLPPRSALDLTSAGA</sequence>
<protein>
    <recommendedName>
        <fullName evidence="1">Uracil-DNA glycosylase</fullName>
        <shortName evidence="1">UDG</shortName>
        <ecNumber evidence="1">3.2.2.27</ecNumber>
    </recommendedName>
</protein>
<keyword id="KW-0963">Cytoplasm</keyword>
<keyword id="KW-0227">DNA damage</keyword>
<keyword id="KW-0234">DNA repair</keyword>
<keyword id="KW-0378">Hydrolase</keyword>
<feature type="chain" id="PRO_0000176166" description="Uracil-DNA glycosylase">
    <location>
        <begin position="1"/>
        <end position="241"/>
    </location>
</feature>
<feature type="active site" description="Proton acceptor" evidence="1">
    <location>
        <position position="71"/>
    </location>
</feature>
<dbReference type="EC" id="3.2.2.27" evidence="1"/>
<dbReference type="EMBL" id="AE008923">
    <property type="protein sequence ID" value="AAM38667.1"/>
    <property type="molecule type" value="Genomic_DNA"/>
</dbReference>
<dbReference type="RefSeq" id="WP_005911429.1">
    <property type="nucleotide sequence ID" value="NC_003919.1"/>
</dbReference>
<dbReference type="SMR" id="Q8PFZ6"/>
<dbReference type="GeneID" id="66912846"/>
<dbReference type="KEGG" id="xac:XAC3825"/>
<dbReference type="eggNOG" id="COG0692">
    <property type="taxonomic scope" value="Bacteria"/>
</dbReference>
<dbReference type="HOGENOM" id="CLU_032162_3_1_6"/>
<dbReference type="Proteomes" id="UP000000576">
    <property type="component" value="Chromosome"/>
</dbReference>
<dbReference type="GO" id="GO:0005737">
    <property type="term" value="C:cytoplasm"/>
    <property type="evidence" value="ECO:0007669"/>
    <property type="project" value="UniProtKB-SubCell"/>
</dbReference>
<dbReference type="GO" id="GO:0004844">
    <property type="term" value="F:uracil DNA N-glycosylase activity"/>
    <property type="evidence" value="ECO:0007669"/>
    <property type="project" value="UniProtKB-UniRule"/>
</dbReference>
<dbReference type="GO" id="GO:0097510">
    <property type="term" value="P:base-excision repair, AP site formation via deaminated base removal"/>
    <property type="evidence" value="ECO:0007669"/>
    <property type="project" value="TreeGrafter"/>
</dbReference>
<dbReference type="CDD" id="cd10027">
    <property type="entry name" value="UDG-F1-like"/>
    <property type="match status" value="1"/>
</dbReference>
<dbReference type="FunFam" id="3.40.470.10:FF:000001">
    <property type="entry name" value="Uracil-DNA glycosylase"/>
    <property type="match status" value="1"/>
</dbReference>
<dbReference type="Gene3D" id="3.40.470.10">
    <property type="entry name" value="Uracil-DNA glycosylase-like domain"/>
    <property type="match status" value="1"/>
</dbReference>
<dbReference type="HAMAP" id="MF_00148">
    <property type="entry name" value="UDG"/>
    <property type="match status" value="1"/>
</dbReference>
<dbReference type="InterPro" id="IPR002043">
    <property type="entry name" value="UDG_fam1"/>
</dbReference>
<dbReference type="InterPro" id="IPR018085">
    <property type="entry name" value="Ura-DNA_Glyclase_AS"/>
</dbReference>
<dbReference type="InterPro" id="IPR005122">
    <property type="entry name" value="Uracil-DNA_glycosylase-like"/>
</dbReference>
<dbReference type="InterPro" id="IPR036895">
    <property type="entry name" value="Uracil-DNA_glycosylase-like_sf"/>
</dbReference>
<dbReference type="NCBIfam" id="NF003588">
    <property type="entry name" value="PRK05254.1-1"/>
    <property type="match status" value="1"/>
</dbReference>
<dbReference type="NCBIfam" id="NF003589">
    <property type="entry name" value="PRK05254.1-2"/>
    <property type="match status" value="1"/>
</dbReference>
<dbReference type="NCBIfam" id="NF003591">
    <property type="entry name" value="PRK05254.1-4"/>
    <property type="match status" value="1"/>
</dbReference>
<dbReference type="NCBIfam" id="NF003592">
    <property type="entry name" value="PRK05254.1-5"/>
    <property type="match status" value="1"/>
</dbReference>
<dbReference type="NCBIfam" id="TIGR00628">
    <property type="entry name" value="ung"/>
    <property type="match status" value="1"/>
</dbReference>
<dbReference type="PANTHER" id="PTHR11264">
    <property type="entry name" value="URACIL-DNA GLYCOSYLASE"/>
    <property type="match status" value="1"/>
</dbReference>
<dbReference type="PANTHER" id="PTHR11264:SF0">
    <property type="entry name" value="URACIL-DNA GLYCOSYLASE"/>
    <property type="match status" value="1"/>
</dbReference>
<dbReference type="Pfam" id="PF03167">
    <property type="entry name" value="UDG"/>
    <property type="match status" value="1"/>
</dbReference>
<dbReference type="SMART" id="SM00986">
    <property type="entry name" value="UDG"/>
    <property type="match status" value="1"/>
</dbReference>
<dbReference type="SMART" id="SM00987">
    <property type="entry name" value="UreE_C"/>
    <property type="match status" value="1"/>
</dbReference>
<dbReference type="SUPFAM" id="SSF52141">
    <property type="entry name" value="Uracil-DNA glycosylase-like"/>
    <property type="match status" value="1"/>
</dbReference>
<dbReference type="PROSITE" id="PS00130">
    <property type="entry name" value="U_DNA_GLYCOSYLASE"/>
    <property type="match status" value="1"/>
</dbReference>
<accession>Q8PFZ6</accession>
<gene>
    <name evidence="1" type="primary">ung</name>
    <name type="ordered locus">XAC3825</name>
</gene>
<organism>
    <name type="scientific">Xanthomonas axonopodis pv. citri (strain 306)</name>
    <dbReference type="NCBI Taxonomy" id="190486"/>
    <lineage>
        <taxon>Bacteria</taxon>
        <taxon>Pseudomonadati</taxon>
        <taxon>Pseudomonadota</taxon>
        <taxon>Gammaproteobacteria</taxon>
        <taxon>Lysobacterales</taxon>
        <taxon>Lysobacteraceae</taxon>
        <taxon>Xanthomonas</taxon>
    </lineage>
</organism>